<sequence>MIVGLIGVVEKISALEAHIEVQGVVYGVQVSMRTSALLETGQKVRLKILQVIKEDANLLYGFLEESEKILFERLLKINGVGGRIALAILSSFSPNEFENIIATKEVKRLQQVPGIGKKLADKIMVDLIGFFIQDENRPARNEVFLALESLGFKSAEINKVLKTLKPNLSIEAAIKEALQQLRS</sequence>
<proteinExistence type="inferred from homology"/>
<protein>
    <recommendedName>
        <fullName evidence="1">Holliday junction branch migration complex subunit RuvA</fullName>
    </recommendedName>
</protein>
<reference key="1">
    <citation type="journal article" date="2006" name="Proc. Natl. Acad. Sci. U.S.A.">
        <title>The complete genome sequence of a chronic atrophic gastritis Helicobacter pylori strain: evolution during disease progression.</title>
        <authorList>
            <person name="Oh J.D."/>
            <person name="Kling-Baeckhed H."/>
            <person name="Giannakis M."/>
            <person name="Xu J."/>
            <person name="Fulton R.S."/>
            <person name="Fulton L.A."/>
            <person name="Cordum H.S."/>
            <person name="Wang C."/>
            <person name="Elliott G."/>
            <person name="Edwards J."/>
            <person name="Mardis E.R."/>
            <person name="Engstrand L.G."/>
            <person name="Gordon J.I."/>
        </authorList>
    </citation>
    <scope>NUCLEOTIDE SEQUENCE [LARGE SCALE GENOMIC DNA]</scope>
    <source>
        <strain>HPAG1</strain>
    </source>
</reference>
<name>RUVA_HELPH</name>
<organism>
    <name type="scientific">Helicobacter pylori (strain HPAG1)</name>
    <dbReference type="NCBI Taxonomy" id="357544"/>
    <lineage>
        <taxon>Bacteria</taxon>
        <taxon>Pseudomonadati</taxon>
        <taxon>Campylobacterota</taxon>
        <taxon>Epsilonproteobacteria</taxon>
        <taxon>Campylobacterales</taxon>
        <taxon>Helicobacteraceae</taxon>
        <taxon>Helicobacter</taxon>
    </lineage>
</organism>
<keyword id="KW-0963">Cytoplasm</keyword>
<keyword id="KW-0227">DNA damage</keyword>
<keyword id="KW-0233">DNA recombination</keyword>
<keyword id="KW-0234">DNA repair</keyword>
<keyword id="KW-0238">DNA-binding</keyword>
<gene>
    <name evidence="1" type="primary">ruvA</name>
    <name type="ordered locus">HPAG1_0863</name>
</gene>
<dbReference type="EMBL" id="CP000241">
    <property type="protein sequence ID" value="ABF84930.1"/>
    <property type="molecule type" value="Genomic_DNA"/>
</dbReference>
<dbReference type="RefSeq" id="WP_000635138.1">
    <property type="nucleotide sequence ID" value="NC_008086.1"/>
</dbReference>
<dbReference type="SMR" id="Q1CSZ2"/>
<dbReference type="KEGG" id="hpa:HPAG1_0863"/>
<dbReference type="HOGENOM" id="CLU_087936_3_1_7"/>
<dbReference type="GO" id="GO:0005737">
    <property type="term" value="C:cytoplasm"/>
    <property type="evidence" value="ECO:0007669"/>
    <property type="project" value="UniProtKB-SubCell"/>
</dbReference>
<dbReference type="GO" id="GO:0009379">
    <property type="term" value="C:Holliday junction helicase complex"/>
    <property type="evidence" value="ECO:0007669"/>
    <property type="project" value="InterPro"/>
</dbReference>
<dbReference type="GO" id="GO:0048476">
    <property type="term" value="C:Holliday junction resolvase complex"/>
    <property type="evidence" value="ECO:0007669"/>
    <property type="project" value="UniProtKB-UniRule"/>
</dbReference>
<dbReference type="GO" id="GO:0005524">
    <property type="term" value="F:ATP binding"/>
    <property type="evidence" value="ECO:0007669"/>
    <property type="project" value="InterPro"/>
</dbReference>
<dbReference type="GO" id="GO:0000400">
    <property type="term" value="F:four-way junction DNA binding"/>
    <property type="evidence" value="ECO:0007669"/>
    <property type="project" value="UniProtKB-UniRule"/>
</dbReference>
<dbReference type="GO" id="GO:0009378">
    <property type="term" value="F:four-way junction helicase activity"/>
    <property type="evidence" value="ECO:0007669"/>
    <property type="project" value="InterPro"/>
</dbReference>
<dbReference type="GO" id="GO:0006310">
    <property type="term" value="P:DNA recombination"/>
    <property type="evidence" value="ECO:0007669"/>
    <property type="project" value="UniProtKB-UniRule"/>
</dbReference>
<dbReference type="GO" id="GO:0006281">
    <property type="term" value="P:DNA repair"/>
    <property type="evidence" value="ECO:0007669"/>
    <property type="project" value="UniProtKB-UniRule"/>
</dbReference>
<dbReference type="CDD" id="cd14332">
    <property type="entry name" value="UBA_RuvA_C"/>
    <property type="match status" value="1"/>
</dbReference>
<dbReference type="Gene3D" id="1.10.150.20">
    <property type="entry name" value="5' to 3' exonuclease, C-terminal subdomain"/>
    <property type="match status" value="1"/>
</dbReference>
<dbReference type="Gene3D" id="1.10.8.10">
    <property type="entry name" value="DNA helicase RuvA subunit, C-terminal domain"/>
    <property type="match status" value="1"/>
</dbReference>
<dbReference type="Gene3D" id="2.40.50.140">
    <property type="entry name" value="Nucleic acid-binding proteins"/>
    <property type="match status" value="1"/>
</dbReference>
<dbReference type="HAMAP" id="MF_00031">
    <property type="entry name" value="DNA_HJ_migration_RuvA"/>
    <property type="match status" value="1"/>
</dbReference>
<dbReference type="InterPro" id="IPR013849">
    <property type="entry name" value="DNA_helicase_Holl-junc_RuvA_I"/>
</dbReference>
<dbReference type="InterPro" id="IPR003583">
    <property type="entry name" value="Hlx-hairpin-Hlx_DNA-bd_motif"/>
</dbReference>
<dbReference type="InterPro" id="IPR012340">
    <property type="entry name" value="NA-bd_OB-fold"/>
</dbReference>
<dbReference type="InterPro" id="IPR000085">
    <property type="entry name" value="RuvA"/>
</dbReference>
<dbReference type="InterPro" id="IPR010994">
    <property type="entry name" value="RuvA_2-like"/>
</dbReference>
<dbReference type="InterPro" id="IPR011114">
    <property type="entry name" value="RuvA_C"/>
</dbReference>
<dbReference type="InterPro" id="IPR036267">
    <property type="entry name" value="RuvA_C_sf"/>
</dbReference>
<dbReference type="NCBIfam" id="TIGR00084">
    <property type="entry name" value="ruvA"/>
    <property type="match status" value="1"/>
</dbReference>
<dbReference type="Pfam" id="PF14520">
    <property type="entry name" value="HHH_5"/>
    <property type="match status" value="1"/>
</dbReference>
<dbReference type="Pfam" id="PF07499">
    <property type="entry name" value="RuvA_C"/>
    <property type="match status" value="1"/>
</dbReference>
<dbReference type="Pfam" id="PF01330">
    <property type="entry name" value="RuvA_N"/>
    <property type="match status" value="1"/>
</dbReference>
<dbReference type="SMART" id="SM00278">
    <property type="entry name" value="HhH1"/>
    <property type="match status" value="2"/>
</dbReference>
<dbReference type="SUPFAM" id="SSF46929">
    <property type="entry name" value="DNA helicase RuvA subunit, C-terminal domain"/>
    <property type="match status" value="1"/>
</dbReference>
<dbReference type="SUPFAM" id="SSF50249">
    <property type="entry name" value="Nucleic acid-binding proteins"/>
    <property type="match status" value="1"/>
</dbReference>
<dbReference type="SUPFAM" id="SSF47781">
    <property type="entry name" value="RuvA domain 2-like"/>
    <property type="match status" value="1"/>
</dbReference>
<accession>Q1CSZ2</accession>
<feature type="chain" id="PRO_1000002463" description="Holliday junction branch migration complex subunit RuvA">
    <location>
        <begin position="1"/>
        <end position="183"/>
    </location>
</feature>
<feature type="region of interest" description="Domain I" evidence="1">
    <location>
        <begin position="1"/>
        <end position="63"/>
    </location>
</feature>
<feature type="region of interest" description="Domain II" evidence="1">
    <location>
        <begin position="64"/>
        <end position="139"/>
    </location>
</feature>
<feature type="region of interest" description="Domain III" evidence="1">
    <location>
        <begin position="139"/>
        <end position="183"/>
    </location>
</feature>
<feature type="region of interest" description="Flexible linker" evidence="1">
    <location>
        <position position="139"/>
    </location>
</feature>
<comment type="function">
    <text evidence="1">The RuvA-RuvB-RuvC complex processes Holliday junction (HJ) DNA during genetic recombination and DNA repair, while the RuvA-RuvB complex plays an important role in the rescue of blocked DNA replication forks via replication fork reversal (RFR). RuvA specifically binds to HJ cruciform DNA, conferring on it an open structure. The RuvB hexamer acts as an ATP-dependent pump, pulling dsDNA into and through the RuvAB complex. HJ branch migration allows RuvC to scan DNA until it finds its consensus sequence, where it cleaves and resolves the cruciform DNA.</text>
</comment>
<comment type="subunit">
    <text evidence="1">Homotetramer. Forms an RuvA(8)-RuvB(12)-Holliday junction (HJ) complex. HJ DNA is sandwiched between 2 RuvA tetramers; dsDNA enters through RuvA and exits via RuvB. An RuvB hexamer assembles on each DNA strand where it exits the tetramer. Each RuvB hexamer is contacted by two RuvA subunits (via domain III) on 2 adjacent RuvB subunits; this complex drives branch migration. In the full resolvosome a probable DNA-RuvA(4)-RuvB(12)-RuvC(2) complex forms which resolves the HJ.</text>
</comment>
<comment type="subcellular location">
    <subcellularLocation>
        <location evidence="1">Cytoplasm</location>
    </subcellularLocation>
</comment>
<comment type="domain">
    <text evidence="1">Has three domains with a flexible linker between the domains II and III and assumes an 'L' shape. Domain III is highly mobile and contacts RuvB.</text>
</comment>
<comment type="similarity">
    <text evidence="1">Belongs to the RuvA family.</text>
</comment>
<evidence type="ECO:0000255" key="1">
    <source>
        <dbReference type="HAMAP-Rule" id="MF_00031"/>
    </source>
</evidence>